<feature type="signal peptide" description="Tat-type signal" evidence="1">
    <location>
        <begin position="1"/>
        <end position="31"/>
    </location>
</feature>
<feature type="chain" id="PRO_0000256077" description="Periplasmic nitrate reductase" evidence="1">
    <location>
        <begin position="32"/>
        <end position="830"/>
    </location>
</feature>
<feature type="domain" description="4Fe-4S Mo/W bis-MGD-type" evidence="1">
    <location>
        <begin position="39"/>
        <end position="95"/>
    </location>
</feature>
<feature type="binding site" evidence="1">
    <location>
        <position position="46"/>
    </location>
    <ligand>
        <name>[4Fe-4S] cluster</name>
        <dbReference type="ChEBI" id="CHEBI:49883"/>
    </ligand>
</feature>
<feature type="binding site" evidence="1">
    <location>
        <position position="49"/>
    </location>
    <ligand>
        <name>[4Fe-4S] cluster</name>
        <dbReference type="ChEBI" id="CHEBI:49883"/>
    </ligand>
</feature>
<feature type="binding site" evidence="1">
    <location>
        <position position="53"/>
    </location>
    <ligand>
        <name>[4Fe-4S] cluster</name>
        <dbReference type="ChEBI" id="CHEBI:49883"/>
    </ligand>
</feature>
<feature type="binding site" evidence="1">
    <location>
        <position position="81"/>
    </location>
    <ligand>
        <name>[4Fe-4S] cluster</name>
        <dbReference type="ChEBI" id="CHEBI:49883"/>
    </ligand>
</feature>
<feature type="binding site" evidence="1">
    <location>
        <position position="83"/>
    </location>
    <ligand>
        <name>Mo-bis(molybdopterin guanine dinucleotide)</name>
        <dbReference type="ChEBI" id="CHEBI:60539"/>
    </ligand>
</feature>
<feature type="binding site" evidence="1">
    <location>
        <position position="150"/>
    </location>
    <ligand>
        <name>Mo-bis(molybdopterin guanine dinucleotide)</name>
        <dbReference type="ChEBI" id="CHEBI:60539"/>
    </ligand>
</feature>
<feature type="binding site" evidence="1">
    <location>
        <position position="175"/>
    </location>
    <ligand>
        <name>Mo-bis(molybdopterin guanine dinucleotide)</name>
        <dbReference type="ChEBI" id="CHEBI:60539"/>
    </ligand>
</feature>
<feature type="binding site" evidence="1">
    <location>
        <position position="179"/>
    </location>
    <ligand>
        <name>Mo-bis(molybdopterin guanine dinucleotide)</name>
        <dbReference type="ChEBI" id="CHEBI:60539"/>
    </ligand>
</feature>
<feature type="binding site" evidence="1">
    <location>
        <begin position="212"/>
        <end position="219"/>
    </location>
    <ligand>
        <name>Mo-bis(molybdopterin guanine dinucleotide)</name>
        <dbReference type="ChEBI" id="CHEBI:60539"/>
    </ligand>
</feature>
<feature type="binding site" evidence="1">
    <location>
        <begin position="243"/>
        <end position="247"/>
    </location>
    <ligand>
        <name>Mo-bis(molybdopterin guanine dinucleotide)</name>
        <dbReference type="ChEBI" id="CHEBI:60539"/>
    </ligand>
</feature>
<feature type="binding site" evidence="1">
    <location>
        <begin position="262"/>
        <end position="264"/>
    </location>
    <ligand>
        <name>Mo-bis(molybdopterin guanine dinucleotide)</name>
        <dbReference type="ChEBI" id="CHEBI:60539"/>
    </ligand>
</feature>
<feature type="binding site" evidence="1">
    <location>
        <position position="372"/>
    </location>
    <ligand>
        <name>Mo-bis(molybdopterin guanine dinucleotide)</name>
        <dbReference type="ChEBI" id="CHEBI:60539"/>
    </ligand>
</feature>
<feature type="binding site" evidence="1">
    <location>
        <position position="376"/>
    </location>
    <ligand>
        <name>Mo-bis(molybdopterin guanine dinucleotide)</name>
        <dbReference type="ChEBI" id="CHEBI:60539"/>
    </ligand>
</feature>
<feature type="binding site" evidence="1">
    <location>
        <position position="482"/>
    </location>
    <ligand>
        <name>Mo-bis(molybdopterin guanine dinucleotide)</name>
        <dbReference type="ChEBI" id="CHEBI:60539"/>
    </ligand>
</feature>
<feature type="binding site" evidence="1">
    <location>
        <begin position="508"/>
        <end position="509"/>
    </location>
    <ligand>
        <name>Mo-bis(molybdopterin guanine dinucleotide)</name>
        <dbReference type="ChEBI" id="CHEBI:60539"/>
    </ligand>
</feature>
<feature type="binding site" evidence="1">
    <location>
        <position position="531"/>
    </location>
    <ligand>
        <name>Mo-bis(molybdopterin guanine dinucleotide)</name>
        <dbReference type="ChEBI" id="CHEBI:60539"/>
    </ligand>
</feature>
<feature type="binding site" evidence="1">
    <location>
        <position position="558"/>
    </location>
    <ligand>
        <name>Mo-bis(molybdopterin guanine dinucleotide)</name>
        <dbReference type="ChEBI" id="CHEBI:60539"/>
    </ligand>
</feature>
<feature type="binding site" evidence="1">
    <location>
        <begin position="718"/>
        <end position="727"/>
    </location>
    <ligand>
        <name>Mo-bis(molybdopterin guanine dinucleotide)</name>
        <dbReference type="ChEBI" id="CHEBI:60539"/>
    </ligand>
</feature>
<feature type="binding site" evidence="1">
    <location>
        <position position="794"/>
    </location>
    <ligand>
        <name>substrate</name>
    </ligand>
</feature>
<feature type="binding site" evidence="1">
    <location>
        <position position="802"/>
    </location>
    <ligand>
        <name>Mo-bis(molybdopterin guanine dinucleotide)</name>
        <dbReference type="ChEBI" id="CHEBI:60539"/>
    </ligand>
</feature>
<feature type="binding site" evidence="1">
    <location>
        <position position="819"/>
    </location>
    <ligand>
        <name>Mo-bis(molybdopterin guanine dinucleotide)</name>
        <dbReference type="ChEBI" id="CHEBI:60539"/>
    </ligand>
</feature>
<gene>
    <name evidence="1" type="primary">napA</name>
    <name type="ordered locus">YPA_2229</name>
</gene>
<sequence length="830" mass="93226">MKLSRRDFMKANAAVAAAAAAGMTIPTVAKAVGETTNAIKWDKAPCRFCGTGCGVLVGTQNGRIVASQGDPDSPVNRGLNCIKGYFLPKIMYGKDRLTQPLLRMKDGQYDKEGDFTPISWEKAFDIMELKFKNALKEKGPTAVGMFGSGQWTVWEGYAALKLLKGGFRSNNLDPNARHCMASSVVGFMRTFGMDEPMGCYDDIEEADAFVLWGSNMAEMHPVLWSRMTSRRLTNAHVRIAVLSTYEHRSFELADNPIVFTPQTDLVIMNYIANYIIQNNAVDKDFLAQHVNFRRGATDIGYGLRPTHPLEKAAKNPGSDASEPMSFEDFKTFVAEYTLEKAAKMSGVPEDQLESLAQLYADPKVKLVSYWTMGFNQHTRGVWANNMCYNLHLLTGKISTPGSGPFSLTGQPSACGTAREVGTFSHRLPADMVVTNEKHRQIAETTWQLPAGTIPEKVGLHAVAQDRALKDGTLNAYWVMCNNNMQAGPNINEERMPGWRDPRNFIVVSDPYPTISALSADLILPTSMWVEKEGAYGNAERRTQFWRQQVPSPGEAKSDLWQIVEFAKRFNVEEVWPAELVNQKPEYRGKNLYEVLFANDVVSKYPLSEIPDDQLNDEARDFGFYIQKGLFEEYASFGRGHAHDLAPFDVYHQVRGLRWPVVDGKETLWRYREGFDPFVPKGEEVRFYGKPDGKAVIFALPYEPAAESPDQEYDLWLSTGRVLEHWHTGSMTRRVPELHRAFPEAVLFIHPLDAKARGLHRGDKVKVISRRGEVISLVETRGRNRPPRGLVYMPFFDAAQLVNNLTLDATDPLSKETDFKKCAVKLERVVA</sequence>
<keyword id="KW-0004">4Fe-4S</keyword>
<keyword id="KW-0249">Electron transport</keyword>
<keyword id="KW-0408">Iron</keyword>
<keyword id="KW-0411">Iron-sulfur</keyword>
<keyword id="KW-0479">Metal-binding</keyword>
<keyword id="KW-0500">Molybdenum</keyword>
<keyword id="KW-0534">Nitrate assimilation</keyword>
<keyword id="KW-0560">Oxidoreductase</keyword>
<keyword id="KW-0574">Periplasm</keyword>
<keyword id="KW-0732">Signal</keyword>
<keyword id="KW-0813">Transport</keyword>
<name>NAPA_YERPA</name>
<reference key="1">
    <citation type="journal article" date="2006" name="J. Bacteriol.">
        <title>Complete genome sequence of Yersinia pestis strains Antiqua and Nepal516: evidence of gene reduction in an emerging pathogen.</title>
        <authorList>
            <person name="Chain P.S.G."/>
            <person name="Hu P."/>
            <person name="Malfatti S.A."/>
            <person name="Radnedge L."/>
            <person name="Larimer F."/>
            <person name="Vergez L.M."/>
            <person name="Worsham P."/>
            <person name="Chu M.C."/>
            <person name="Andersen G.L."/>
        </authorList>
    </citation>
    <scope>NUCLEOTIDE SEQUENCE [LARGE SCALE GENOMIC DNA]</scope>
    <source>
        <strain>Antiqua</strain>
    </source>
</reference>
<comment type="function">
    <text evidence="1">Catalytic subunit of the periplasmic nitrate reductase complex NapAB. Receives electrons from NapB and catalyzes the reduction of nitrate to nitrite.</text>
</comment>
<comment type="catalytic activity">
    <reaction evidence="1">
        <text>2 Fe(II)-[cytochrome] + nitrate + 2 H(+) = 2 Fe(III)-[cytochrome] + nitrite + H2O</text>
        <dbReference type="Rhea" id="RHEA:12909"/>
        <dbReference type="Rhea" id="RHEA-COMP:11777"/>
        <dbReference type="Rhea" id="RHEA-COMP:11778"/>
        <dbReference type="ChEBI" id="CHEBI:15377"/>
        <dbReference type="ChEBI" id="CHEBI:15378"/>
        <dbReference type="ChEBI" id="CHEBI:16301"/>
        <dbReference type="ChEBI" id="CHEBI:17632"/>
        <dbReference type="ChEBI" id="CHEBI:29033"/>
        <dbReference type="ChEBI" id="CHEBI:29034"/>
        <dbReference type="EC" id="1.9.6.1"/>
    </reaction>
</comment>
<comment type="cofactor">
    <cofactor evidence="1">
        <name>[4Fe-4S] cluster</name>
        <dbReference type="ChEBI" id="CHEBI:49883"/>
    </cofactor>
    <text evidence="1">Binds 1 [4Fe-4S] cluster.</text>
</comment>
<comment type="cofactor">
    <cofactor evidence="1">
        <name>Mo-bis(molybdopterin guanine dinucleotide)</name>
        <dbReference type="ChEBI" id="CHEBI:60539"/>
    </cofactor>
    <text evidence="1">Binds 1 molybdenum-bis(molybdopterin guanine dinucleotide) (Mo-bis-MGD) cofactor per subunit.</text>
</comment>
<comment type="subunit">
    <text evidence="1">Component of the periplasmic nitrate reductase NapAB complex composed of NapA and NapB.</text>
</comment>
<comment type="subcellular location">
    <subcellularLocation>
        <location evidence="1">Periplasm</location>
    </subcellularLocation>
</comment>
<comment type="PTM">
    <text evidence="1">Predicted to be exported by the Tat system. The position of the signal peptide cleavage has not been experimentally proven.</text>
</comment>
<comment type="similarity">
    <text evidence="1">Belongs to the prokaryotic molybdopterin-containing oxidoreductase family. NasA/NapA/NarB subfamily.</text>
</comment>
<dbReference type="EC" id="1.9.6.1" evidence="1"/>
<dbReference type="EMBL" id="CP000308">
    <property type="protein sequence ID" value="ABG14194.1"/>
    <property type="molecule type" value="Genomic_DNA"/>
</dbReference>
<dbReference type="RefSeq" id="WP_002208534.1">
    <property type="nucleotide sequence ID" value="NZ_CP009906.1"/>
</dbReference>
<dbReference type="SMR" id="Q1C5S8"/>
<dbReference type="GeneID" id="57975664"/>
<dbReference type="KEGG" id="ypa:YPA_2229"/>
<dbReference type="Proteomes" id="UP000001971">
    <property type="component" value="Chromosome"/>
</dbReference>
<dbReference type="GO" id="GO:0016020">
    <property type="term" value="C:membrane"/>
    <property type="evidence" value="ECO:0007669"/>
    <property type="project" value="TreeGrafter"/>
</dbReference>
<dbReference type="GO" id="GO:0009325">
    <property type="term" value="C:nitrate reductase complex"/>
    <property type="evidence" value="ECO:0007669"/>
    <property type="project" value="TreeGrafter"/>
</dbReference>
<dbReference type="GO" id="GO:0042597">
    <property type="term" value="C:periplasmic space"/>
    <property type="evidence" value="ECO:0007669"/>
    <property type="project" value="UniProtKB-SubCell"/>
</dbReference>
<dbReference type="GO" id="GO:0051539">
    <property type="term" value="F:4 iron, 4 sulfur cluster binding"/>
    <property type="evidence" value="ECO:0007669"/>
    <property type="project" value="UniProtKB-KW"/>
</dbReference>
<dbReference type="GO" id="GO:0009055">
    <property type="term" value="F:electron transfer activity"/>
    <property type="evidence" value="ECO:0007669"/>
    <property type="project" value="UniProtKB-UniRule"/>
</dbReference>
<dbReference type="GO" id="GO:0005506">
    <property type="term" value="F:iron ion binding"/>
    <property type="evidence" value="ECO:0007669"/>
    <property type="project" value="UniProtKB-UniRule"/>
</dbReference>
<dbReference type="GO" id="GO:0030151">
    <property type="term" value="F:molybdenum ion binding"/>
    <property type="evidence" value="ECO:0007669"/>
    <property type="project" value="InterPro"/>
</dbReference>
<dbReference type="GO" id="GO:0043546">
    <property type="term" value="F:molybdopterin cofactor binding"/>
    <property type="evidence" value="ECO:0007669"/>
    <property type="project" value="InterPro"/>
</dbReference>
<dbReference type="GO" id="GO:0050140">
    <property type="term" value="F:nitrate reductase (cytochrome) activity"/>
    <property type="evidence" value="ECO:0007669"/>
    <property type="project" value="UniProtKB-EC"/>
</dbReference>
<dbReference type="GO" id="GO:0045333">
    <property type="term" value="P:cellular respiration"/>
    <property type="evidence" value="ECO:0007669"/>
    <property type="project" value="UniProtKB-ARBA"/>
</dbReference>
<dbReference type="GO" id="GO:0006777">
    <property type="term" value="P:Mo-molybdopterin cofactor biosynthetic process"/>
    <property type="evidence" value="ECO:0007669"/>
    <property type="project" value="UniProtKB-UniRule"/>
</dbReference>
<dbReference type="GO" id="GO:0042128">
    <property type="term" value="P:nitrate assimilation"/>
    <property type="evidence" value="ECO:0007669"/>
    <property type="project" value="UniProtKB-UniRule"/>
</dbReference>
<dbReference type="CDD" id="cd02791">
    <property type="entry name" value="MopB_CT_Nitrate-R-NapA-like"/>
    <property type="match status" value="1"/>
</dbReference>
<dbReference type="CDD" id="cd02754">
    <property type="entry name" value="MopB_Nitrate-R-NapA-like"/>
    <property type="match status" value="1"/>
</dbReference>
<dbReference type="FunFam" id="2.40.40.20:FF:000005">
    <property type="entry name" value="Periplasmic nitrate reductase"/>
    <property type="match status" value="1"/>
</dbReference>
<dbReference type="Gene3D" id="2.40.40.20">
    <property type="match status" value="1"/>
</dbReference>
<dbReference type="Gene3D" id="3.30.200.210">
    <property type="match status" value="1"/>
</dbReference>
<dbReference type="Gene3D" id="3.40.50.740">
    <property type="match status" value="1"/>
</dbReference>
<dbReference type="Gene3D" id="3.40.228.10">
    <property type="entry name" value="Dimethylsulfoxide Reductase, domain 2"/>
    <property type="match status" value="1"/>
</dbReference>
<dbReference type="HAMAP" id="MF_01630">
    <property type="entry name" value="Nitrate_reduct_NapA"/>
    <property type="match status" value="1"/>
</dbReference>
<dbReference type="InterPro" id="IPR009010">
    <property type="entry name" value="Asp_de-COase-like_dom_sf"/>
</dbReference>
<dbReference type="InterPro" id="IPR041957">
    <property type="entry name" value="CT_Nitrate-R-NapA-like"/>
</dbReference>
<dbReference type="InterPro" id="IPR006657">
    <property type="entry name" value="MoPterin_dinucl-bd_dom"/>
</dbReference>
<dbReference type="InterPro" id="IPR006656">
    <property type="entry name" value="Mopterin_OxRdtase"/>
</dbReference>
<dbReference type="InterPro" id="IPR006963">
    <property type="entry name" value="Mopterin_OxRdtase_4Fe-4S_dom"/>
</dbReference>
<dbReference type="InterPro" id="IPR027467">
    <property type="entry name" value="MopterinOxRdtase_cofactor_BS"/>
</dbReference>
<dbReference type="InterPro" id="IPR010051">
    <property type="entry name" value="Periplasm_NO3_reductase_lsu"/>
</dbReference>
<dbReference type="InterPro" id="IPR050123">
    <property type="entry name" value="Prok_molybdopt-oxidoreductase"/>
</dbReference>
<dbReference type="InterPro" id="IPR006311">
    <property type="entry name" value="TAT_signal"/>
</dbReference>
<dbReference type="InterPro" id="IPR019546">
    <property type="entry name" value="TAT_signal_bac_arc"/>
</dbReference>
<dbReference type="NCBIfam" id="TIGR01706">
    <property type="entry name" value="NAPA"/>
    <property type="match status" value="1"/>
</dbReference>
<dbReference type="NCBIfam" id="NF010055">
    <property type="entry name" value="PRK13532.1"/>
    <property type="match status" value="1"/>
</dbReference>
<dbReference type="NCBIfam" id="TIGR01409">
    <property type="entry name" value="TAT_signal_seq"/>
    <property type="match status" value="1"/>
</dbReference>
<dbReference type="PANTHER" id="PTHR43105:SF11">
    <property type="entry name" value="PERIPLASMIC NITRATE REDUCTASE"/>
    <property type="match status" value="1"/>
</dbReference>
<dbReference type="PANTHER" id="PTHR43105">
    <property type="entry name" value="RESPIRATORY NITRATE REDUCTASE"/>
    <property type="match status" value="1"/>
</dbReference>
<dbReference type="Pfam" id="PF04879">
    <property type="entry name" value="Molybdop_Fe4S4"/>
    <property type="match status" value="1"/>
</dbReference>
<dbReference type="Pfam" id="PF00384">
    <property type="entry name" value="Molybdopterin"/>
    <property type="match status" value="1"/>
</dbReference>
<dbReference type="Pfam" id="PF01568">
    <property type="entry name" value="Molydop_binding"/>
    <property type="match status" value="1"/>
</dbReference>
<dbReference type="Pfam" id="PF10518">
    <property type="entry name" value="TAT_signal"/>
    <property type="match status" value="1"/>
</dbReference>
<dbReference type="SMART" id="SM00926">
    <property type="entry name" value="Molybdop_Fe4S4"/>
    <property type="match status" value="1"/>
</dbReference>
<dbReference type="SUPFAM" id="SSF50692">
    <property type="entry name" value="ADC-like"/>
    <property type="match status" value="1"/>
</dbReference>
<dbReference type="SUPFAM" id="SSF53706">
    <property type="entry name" value="Formate dehydrogenase/DMSO reductase, domains 1-3"/>
    <property type="match status" value="1"/>
</dbReference>
<dbReference type="PROSITE" id="PS51669">
    <property type="entry name" value="4FE4S_MOW_BIS_MGD"/>
    <property type="match status" value="1"/>
</dbReference>
<dbReference type="PROSITE" id="PS00551">
    <property type="entry name" value="MOLYBDOPTERIN_PROK_1"/>
    <property type="match status" value="1"/>
</dbReference>
<dbReference type="PROSITE" id="PS51318">
    <property type="entry name" value="TAT"/>
    <property type="match status" value="1"/>
</dbReference>
<evidence type="ECO:0000255" key="1">
    <source>
        <dbReference type="HAMAP-Rule" id="MF_01630"/>
    </source>
</evidence>
<organism>
    <name type="scientific">Yersinia pestis bv. Antiqua (strain Antiqua)</name>
    <dbReference type="NCBI Taxonomy" id="360102"/>
    <lineage>
        <taxon>Bacteria</taxon>
        <taxon>Pseudomonadati</taxon>
        <taxon>Pseudomonadota</taxon>
        <taxon>Gammaproteobacteria</taxon>
        <taxon>Enterobacterales</taxon>
        <taxon>Yersiniaceae</taxon>
        <taxon>Yersinia</taxon>
    </lineage>
</organism>
<accession>Q1C5S8</accession>
<protein>
    <recommendedName>
        <fullName evidence="1">Periplasmic nitrate reductase</fullName>
        <ecNumber evidence="1">1.9.6.1</ecNumber>
    </recommendedName>
</protein>
<proteinExistence type="inferred from homology"/>